<protein>
    <recommendedName>
        <fullName evidence="1">Uracil phosphoribosyltransferase</fullName>
        <ecNumber evidence="1">2.4.2.9</ecNumber>
    </recommendedName>
    <alternativeName>
        <fullName evidence="1">UMP pyrophosphorylase</fullName>
    </alternativeName>
    <alternativeName>
        <fullName evidence="1">UPRTase</fullName>
    </alternativeName>
</protein>
<proteinExistence type="inferred from homology"/>
<dbReference type="EC" id="2.4.2.9" evidence="1"/>
<dbReference type="EMBL" id="AP008226">
    <property type="protein sequence ID" value="BAD71135.1"/>
    <property type="molecule type" value="Genomic_DNA"/>
</dbReference>
<dbReference type="RefSeq" id="WP_011173367.1">
    <property type="nucleotide sequence ID" value="NC_006461.1"/>
</dbReference>
<dbReference type="RefSeq" id="YP_144578.1">
    <property type="nucleotide sequence ID" value="NC_006461.1"/>
</dbReference>
<dbReference type="SMR" id="Q5SIQ7"/>
<dbReference type="EnsemblBacteria" id="BAD71135">
    <property type="protein sequence ID" value="BAD71135"/>
    <property type="gene ID" value="BAD71135"/>
</dbReference>
<dbReference type="GeneID" id="3168439"/>
<dbReference type="KEGG" id="ttj:TTHA1312"/>
<dbReference type="PATRIC" id="fig|300852.9.peg.1290"/>
<dbReference type="eggNOG" id="COG0035">
    <property type="taxonomic scope" value="Bacteria"/>
</dbReference>
<dbReference type="HOGENOM" id="CLU_067096_2_2_0"/>
<dbReference type="PhylomeDB" id="Q5SIQ7"/>
<dbReference type="BRENDA" id="2.4.2.9">
    <property type="organism ID" value="2305"/>
</dbReference>
<dbReference type="UniPathway" id="UPA00574">
    <property type="reaction ID" value="UER00636"/>
</dbReference>
<dbReference type="Proteomes" id="UP000000532">
    <property type="component" value="Chromosome"/>
</dbReference>
<dbReference type="GO" id="GO:0005525">
    <property type="term" value="F:GTP binding"/>
    <property type="evidence" value="ECO:0007669"/>
    <property type="project" value="UniProtKB-KW"/>
</dbReference>
<dbReference type="GO" id="GO:0000287">
    <property type="term" value="F:magnesium ion binding"/>
    <property type="evidence" value="ECO:0007669"/>
    <property type="project" value="UniProtKB-UniRule"/>
</dbReference>
<dbReference type="GO" id="GO:0004845">
    <property type="term" value="F:uracil phosphoribosyltransferase activity"/>
    <property type="evidence" value="ECO:0007669"/>
    <property type="project" value="UniProtKB-UniRule"/>
</dbReference>
<dbReference type="GO" id="GO:0044206">
    <property type="term" value="P:UMP salvage"/>
    <property type="evidence" value="ECO:0007669"/>
    <property type="project" value="UniProtKB-UniRule"/>
</dbReference>
<dbReference type="GO" id="GO:0006223">
    <property type="term" value="P:uracil salvage"/>
    <property type="evidence" value="ECO:0007669"/>
    <property type="project" value="InterPro"/>
</dbReference>
<dbReference type="CDD" id="cd06223">
    <property type="entry name" value="PRTases_typeI"/>
    <property type="match status" value="1"/>
</dbReference>
<dbReference type="FunFam" id="3.40.50.2020:FF:000003">
    <property type="entry name" value="Uracil phosphoribosyltransferase"/>
    <property type="match status" value="1"/>
</dbReference>
<dbReference type="Gene3D" id="3.40.50.2020">
    <property type="match status" value="1"/>
</dbReference>
<dbReference type="HAMAP" id="MF_01218_B">
    <property type="entry name" value="Upp_B"/>
    <property type="match status" value="1"/>
</dbReference>
<dbReference type="InterPro" id="IPR000836">
    <property type="entry name" value="PRibTrfase_dom"/>
</dbReference>
<dbReference type="InterPro" id="IPR029057">
    <property type="entry name" value="PRTase-like"/>
</dbReference>
<dbReference type="InterPro" id="IPR034332">
    <property type="entry name" value="Upp_B"/>
</dbReference>
<dbReference type="InterPro" id="IPR050054">
    <property type="entry name" value="UPRTase/APRTase"/>
</dbReference>
<dbReference type="InterPro" id="IPR005765">
    <property type="entry name" value="Ura_phspho_trans"/>
</dbReference>
<dbReference type="NCBIfam" id="NF001097">
    <property type="entry name" value="PRK00129.1"/>
    <property type="match status" value="1"/>
</dbReference>
<dbReference type="NCBIfam" id="TIGR01091">
    <property type="entry name" value="upp"/>
    <property type="match status" value="1"/>
</dbReference>
<dbReference type="PANTHER" id="PTHR32315">
    <property type="entry name" value="ADENINE PHOSPHORIBOSYLTRANSFERASE"/>
    <property type="match status" value="1"/>
</dbReference>
<dbReference type="PANTHER" id="PTHR32315:SF4">
    <property type="entry name" value="URACIL PHOSPHORIBOSYLTRANSFERASE, CHLOROPLASTIC"/>
    <property type="match status" value="1"/>
</dbReference>
<dbReference type="Pfam" id="PF14681">
    <property type="entry name" value="UPRTase"/>
    <property type="match status" value="1"/>
</dbReference>
<dbReference type="SUPFAM" id="SSF53271">
    <property type="entry name" value="PRTase-like"/>
    <property type="match status" value="1"/>
</dbReference>
<comment type="function">
    <text evidence="1">Catalyzes the conversion of uracil and 5-phospho-alpha-D-ribose 1-diphosphate (PRPP) to UMP and diphosphate.</text>
</comment>
<comment type="catalytic activity">
    <reaction evidence="1">
        <text>UMP + diphosphate = 5-phospho-alpha-D-ribose 1-diphosphate + uracil</text>
        <dbReference type="Rhea" id="RHEA:13017"/>
        <dbReference type="ChEBI" id="CHEBI:17568"/>
        <dbReference type="ChEBI" id="CHEBI:33019"/>
        <dbReference type="ChEBI" id="CHEBI:57865"/>
        <dbReference type="ChEBI" id="CHEBI:58017"/>
        <dbReference type="EC" id="2.4.2.9"/>
    </reaction>
</comment>
<comment type="cofactor">
    <cofactor evidence="1">
        <name>Mg(2+)</name>
        <dbReference type="ChEBI" id="CHEBI:18420"/>
    </cofactor>
    <text evidence="1">Binds 1 Mg(2+) ion per subunit. The magnesium is bound as Mg-PRPP.</text>
</comment>
<comment type="activity regulation">
    <text evidence="1">Allosterically activated by GTP.</text>
</comment>
<comment type="pathway">
    <text evidence="1">Pyrimidine metabolism; UMP biosynthesis via salvage pathway; UMP from uracil: step 1/1.</text>
</comment>
<comment type="similarity">
    <text evidence="1">Belongs to the UPRTase family.</text>
</comment>
<organism>
    <name type="scientific">Thermus thermophilus (strain ATCC 27634 / DSM 579 / HB8)</name>
    <dbReference type="NCBI Taxonomy" id="300852"/>
    <lineage>
        <taxon>Bacteria</taxon>
        <taxon>Thermotogati</taxon>
        <taxon>Deinococcota</taxon>
        <taxon>Deinococci</taxon>
        <taxon>Thermales</taxon>
        <taxon>Thermaceae</taxon>
        <taxon>Thermus</taxon>
    </lineage>
</organism>
<gene>
    <name evidence="1" type="primary">upp</name>
    <name type="ordered locus">TTHA1312</name>
</gene>
<accession>Q5SIQ7</accession>
<sequence>MRITLVDHPLVQHKLAHLRDKRTGPKDFRELAEEVAMLMAYEAMRDLELEETTVETPIAPARVKVLSGKKLALVAILRAGLVMVEGILKLVPHARVGHIGLYRDPESLNPVQYYIKLPPDIAERRAFLLDPMLATGGSASLALSLLKERGATGVKLMAILAAPEGLERIAKDHPDTEVVVAAIDERLNDHGYIVPGLGDAGDRIYGTK</sequence>
<evidence type="ECO:0000255" key="1">
    <source>
        <dbReference type="HAMAP-Rule" id="MF_01218"/>
    </source>
</evidence>
<feature type="chain" id="PRO_1000053808" description="Uracil phosphoribosyltransferase">
    <location>
        <begin position="1"/>
        <end position="208"/>
    </location>
</feature>
<feature type="binding site" evidence="1">
    <location>
        <position position="78"/>
    </location>
    <ligand>
        <name>5-phospho-alpha-D-ribose 1-diphosphate</name>
        <dbReference type="ChEBI" id="CHEBI:58017"/>
    </ligand>
</feature>
<feature type="binding site" evidence="1">
    <location>
        <position position="103"/>
    </location>
    <ligand>
        <name>5-phospho-alpha-D-ribose 1-diphosphate</name>
        <dbReference type="ChEBI" id="CHEBI:58017"/>
    </ligand>
</feature>
<feature type="binding site" evidence="1">
    <location>
        <begin position="130"/>
        <end position="138"/>
    </location>
    <ligand>
        <name>5-phospho-alpha-D-ribose 1-diphosphate</name>
        <dbReference type="ChEBI" id="CHEBI:58017"/>
    </ligand>
</feature>
<feature type="binding site" evidence="1">
    <location>
        <position position="193"/>
    </location>
    <ligand>
        <name>uracil</name>
        <dbReference type="ChEBI" id="CHEBI:17568"/>
    </ligand>
</feature>
<feature type="binding site" evidence="1">
    <location>
        <begin position="198"/>
        <end position="200"/>
    </location>
    <ligand>
        <name>uracil</name>
        <dbReference type="ChEBI" id="CHEBI:17568"/>
    </ligand>
</feature>
<feature type="binding site" evidence="1">
    <location>
        <position position="199"/>
    </location>
    <ligand>
        <name>5-phospho-alpha-D-ribose 1-diphosphate</name>
        <dbReference type="ChEBI" id="CHEBI:58017"/>
    </ligand>
</feature>
<keyword id="KW-0021">Allosteric enzyme</keyword>
<keyword id="KW-0328">Glycosyltransferase</keyword>
<keyword id="KW-0342">GTP-binding</keyword>
<keyword id="KW-0460">Magnesium</keyword>
<keyword id="KW-0547">Nucleotide-binding</keyword>
<keyword id="KW-1185">Reference proteome</keyword>
<keyword id="KW-0808">Transferase</keyword>
<name>UPP_THET8</name>
<reference key="1">
    <citation type="submission" date="2004-11" db="EMBL/GenBank/DDBJ databases">
        <title>Complete genome sequence of Thermus thermophilus HB8.</title>
        <authorList>
            <person name="Masui R."/>
            <person name="Kurokawa K."/>
            <person name="Nakagawa N."/>
            <person name="Tokunaga F."/>
            <person name="Koyama Y."/>
            <person name="Shibata T."/>
            <person name="Oshima T."/>
            <person name="Yokoyama S."/>
            <person name="Yasunaga T."/>
            <person name="Kuramitsu S."/>
        </authorList>
    </citation>
    <scope>NUCLEOTIDE SEQUENCE [LARGE SCALE GENOMIC DNA]</scope>
    <source>
        <strain>ATCC 27634 / DSM 579 / HB8</strain>
    </source>
</reference>